<sequence>MSIKYLMLLFAAMIIRSLADSGNAIETTSPEITNATTDIPAIRLCGPEGDGYCLHGDCIHARDIDGMYCRCSHGYTGIRCQHVVLVDYQRSGKPDTTTSYIPSLGIVLVLVGIIITCCLLSVYMFTRRTKLPIQDMVVLYFL</sequence>
<reference key="1">
    <citation type="journal article" date="2022" name="J. Infect. Dis.">
        <title>Exportation of Monkeypox virus from the African continent.</title>
        <authorList>
            <person name="Mauldin M.R."/>
            <person name="McCollum A.M."/>
            <person name="Nakazawa Y.J."/>
            <person name="Mandra A."/>
            <person name="Whitehouse E.R."/>
            <person name="Davidson W."/>
            <person name="Zhao H."/>
            <person name="Gao J."/>
            <person name="Li Y."/>
            <person name="Doty J."/>
            <person name="Yinka-Ogunleye A."/>
            <person name="Akinpelu A."/>
            <person name="Aruna O."/>
            <person name="Naidoo D."/>
            <person name="Lewandowski K."/>
            <person name="Afrough B."/>
            <person name="Graham V."/>
            <person name="Aarons E."/>
            <person name="Hewson R."/>
            <person name="Vipond R."/>
            <person name="Dunning J."/>
            <person name="Chand M."/>
            <person name="Brown C."/>
            <person name="Cohen-Gihon I."/>
            <person name="Erez N."/>
            <person name="Shifman O."/>
            <person name="Israeli O."/>
            <person name="Sharon M."/>
            <person name="Schwartz E."/>
            <person name="Beth-Din A."/>
            <person name="Zvi A."/>
            <person name="Mak T.M."/>
            <person name="Ng Y.K."/>
            <person name="Cui L."/>
            <person name="Lin R.T.P."/>
            <person name="Olson V.A."/>
            <person name="Brooks T."/>
            <person name="Paran N."/>
            <person name="Ihekweazu C."/>
            <person name="Reynolds M.G."/>
        </authorList>
    </citation>
    <scope>NUCLEOTIDE SEQUENCE [LARGE SCALE GENOMIC DNA]</scope>
    <source>
        <strain>MPXV-M5312_HM12_Rivers</strain>
    </source>
</reference>
<accession>A0A7H0DMZ6</accession>
<organismHost>
    <name type="scientific">Cynomys gunnisoni</name>
    <name type="common">Gunnison's prairie dog</name>
    <name type="synonym">Spermophilus gunnisoni</name>
    <dbReference type="NCBI Taxonomy" id="45479"/>
</organismHost>
<organismHost>
    <name type="scientific">Cynomys leucurus</name>
    <name type="common">White-tailed prairie dog</name>
    <dbReference type="NCBI Taxonomy" id="99825"/>
</organismHost>
<organismHost>
    <name type="scientific">Cynomys ludovicianus</name>
    <name type="common">Black-tailed prairie dog</name>
    <dbReference type="NCBI Taxonomy" id="45480"/>
</organismHost>
<organismHost>
    <name type="scientific">Cynomys mexicanus</name>
    <name type="common">Mexican prairie dog</name>
    <dbReference type="NCBI Taxonomy" id="99826"/>
</organismHost>
<organismHost>
    <name type="scientific">Cynomys parvidens</name>
    <name type="common">Utah prairie dog</name>
    <dbReference type="NCBI Taxonomy" id="99827"/>
</organismHost>
<organismHost>
    <name type="scientific">Gliridae</name>
    <name type="common">dormice</name>
    <dbReference type="NCBI Taxonomy" id="30650"/>
</organismHost>
<organismHost>
    <name type="scientific">Heliosciurus ruwenzorii</name>
    <name type="common">Ruwenzori sun squirrel</name>
    <dbReference type="NCBI Taxonomy" id="226685"/>
</organismHost>
<organismHost>
    <name type="scientific">Homo sapiens</name>
    <name type="common">Human</name>
    <dbReference type="NCBI Taxonomy" id="9606"/>
</organismHost>
<organismHost>
    <name type="scientific">Mus musculus</name>
    <name type="common">Mouse</name>
    <dbReference type="NCBI Taxonomy" id="10090"/>
</organismHost>
<comment type="function">
    <molecule>Viral epidermal growth factor</molecule>
    <text evidence="1">Stimulates cellular proliferation (hyperplasia)and mobility around infected cells to promote rapid and efficient spread of infection. This effect is beneficial for virus replication in vivo, because poxviruses replicate possibly better in proliferating cells than in quiescent cells. Acts by binding host EGFR, inducing its dimerization, autophosphorylation and leading to activation of several cellular pathways regulating cell proliferation or cell survival. The activation by host EGFR of mitogen activated protein kinases (MAPK) and extracellular-signal regulated kinases (ERK) are essential for the positive effect of vaccinia growth factor on poxvirus virulence in vivo.</text>
</comment>
<comment type="subunit">
    <molecule>Viral epidermal growth factor</molecule>
    <text evidence="1">Interacts with host EGFR.</text>
</comment>
<comment type="subcellular location">
    <molecule>Pro-Viral epidermal growth factor</molecule>
    <subcellularLocation>
        <location evidence="1">Host membrane</location>
        <topology evidence="1">Single-pass type I membrane protein</topology>
    </subcellularLocation>
</comment>
<comment type="subcellular location">
    <molecule>Viral epidermal growth factor</molecule>
    <subcellularLocation>
        <location>Secreted</location>
    </subcellularLocation>
</comment>
<comment type="induction">
    <text evidence="1">Expressed in the early phase of the viral replicative cycle.</text>
</comment>
<comment type="PTM">
    <text evidence="1">Cleaved at the cell surface by host ADAM10, thereby releasing the secreted form of VGF.</text>
</comment>
<comment type="similarity">
    <text evidence="5">Belongs to the orthopoxvirus OPG019 family.</text>
</comment>
<organism>
    <name type="scientific">Monkeypox virus</name>
    <dbReference type="NCBI Taxonomy" id="10244"/>
    <lineage>
        <taxon>Viruses</taxon>
        <taxon>Varidnaviria</taxon>
        <taxon>Bamfordvirae</taxon>
        <taxon>Nucleocytoviricota</taxon>
        <taxon>Pokkesviricetes</taxon>
        <taxon>Chitovirales</taxon>
        <taxon>Poxviridae</taxon>
        <taxon>Chordopoxvirinae</taxon>
        <taxon>Orthopoxvirus</taxon>
    </lineage>
</organism>
<dbReference type="EMBL" id="MT903340">
    <property type="protein sequence ID" value="QNP12879.1"/>
    <property type="molecule type" value="Genomic_DNA"/>
</dbReference>
<dbReference type="RefSeq" id="YP_010377006.1">
    <property type="nucleotide sequence ID" value="NC_063383.1"/>
</dbReference>
<dbReference type="SMR" id="A0A7H0DMZ6"/>
<dbReference type="GeneID" id="72551421"/>
<dbReference type="Proteomes" id="UP000516359">
    <property type="component" value="Genome"/>
</dbReference>
<dbReference type="GO" id="GO:0005615">
    <property type="term" value="C:extracellular space"/>
    <property type="evidence" value="ECO:0007669"/>
    <property type="project" value="TreeGrafter"/>
</dbReference>
<dbReference type="GO" id="GO:0033644">
    <property type="term" value="C:host cell membrane"/>
    <property type="evidence" value="ECO:0007669"/>
    <property type="project" value="UniProtKB-SubCell"/>
</dbReference>
<dbReference type="GO" id="GO:0016020">
    <property type="term" value="C:membrane"/>
    <property type="evidence" value="ECO:0007669"/>
    <property type="project" value="UniProtKB-KW"/>
</dbReference>
<dbReference type="GO" id="GO:0005154">
    <property type="term" value="F:epidermal growth factor receptor binding"/>
    <property type="evidence" value="ECO:0007669"/>
    <property type="project" value="InterPro"/>
</dbReference>
<dbReference type="GO" id="GO:0008083">
    <property type="term" value="F:growth factor activity"/>
    <property type="evidence" value="ECO:0007669"/>
    <property type="project" value="UniProtKB-KW"/>
</dbReference>
<dbReference type="GO" id="GO:0007173">
    <property type="term" value="P:epidermal growth factor receptor signaling pathway"/>
    <property type="evidence" value="ECO:0007669"/>
    <property type="project" value="TreeGrafter"/>
</dbReference>
<dbReference type="GO" id="GO:0008284">
    <property type="term" value="P:positive regulation of cell population proliferation"/>
    <property type="evidence" value="ECO:0007669"/>
    <property type="project" value="TreeGrafter"/>
</dbReference>
<dbReference type="GO" id="GO:0045840">
    <property type="term" value="P:positive regulation of mitotic nuclear division"/>
    <property type="evidence" value="ECO:0007669"/>
    <property type="project" value="TreeGrafter"/>
</dbReference>
<dbReference type="Gene3D" id="2.10.25.10">
    <property type="entry name" value="Laminin"/>
    <property type="match status" value="1"/>
</dbReference>
<dbReference type="InterPro" id="IPR000742">
    <property type="entry name" value="EGF-like_dom"/>
</dbReference>
<dbReference type="InterPro" id="IPR011170">
    <property type="entry name" value="GF_C11R"/>
</dbReference>
<dbReference type="PANTHER" id="PTHR10740:SF11">
    <property type="entry name" value="PROEPIREGULIN"/>
    <property type="match status" value="1"/>
</dbReference>
<dbReference type="PANTHER" id="PTHR10740">
    <property type="entry name" value="TRANSFORMING GROWTH FACTOR ALPHA"/>
    <property type="match status" value="1"/>
</dbReference>
<dbReference type="PIRSF" id="PIRSF001779">
    <property type="entry name" value="GF_C11R"/>
    <property type="match status" value="1"/>
</dbReference>
<dbReference type="PRINTS" id="PR00009">
    <property type="entry name" value="EGFTGF"/>
</dbReference>
<dbReference type="SUPFAM" id="SSF57196">
    <property type="entry name" value="EGF/Laminin"/>
    <property type="match status" value="1"/>
</dbReference>
<dbReference type="PROSITE" id="PS00022">
    <property type="entry name" value="EGF_1"/>
    <property type="match status" value="1"/>
</dbReference>
<dbReference type="PROSITE" id="PS01186">
    <property type="entry name" value="EGF_2"/>
    <property type="match status" value="1"/>
</dbReference>
<dbReference type="PROSITE" id="PS50026">
    <property type="entry name" value="EGF_3"/>
    <property type="match status" value="1"/>
</dbReference>
<proteinExistence type="inferred from homology"/>
<keyword id="KW-1015">Disulfide bond</keyword>
<keyword id="KW-0244">Early protein</keyword>
<keyword id="KW-0245">EGF-like domain</keyword>
<keyword id="KW-0325">Glycoprotein</keyword>
<keyword id="KW-0339">Growth factor</keyword>
<keyword id="KW-1043">Host membrane</keyword>
<keyword id="KW-0945">Host-virus interaction</keyword>
<keyword id="KW-0472">Membrane</keyword>
<keyword id="KW-1185">Reference proteome</keyword>
<keyword id="KW-0964">Secreted</keyword>
<keyword id="KW-0732">Signal</keyword>
<keyword id="KW-0812">Transmembrane</keyword>
<keyword id="KW-1133">Transmembrane helix</keyword>
<evidence type="ECO:0000250" key="1">
    <source>
        <dbReference type="UniProtKB" id="P01136"/>
    </source>
</evidence>
<evidence type="ECO:0000255" key="2"/>
<evidence type="ECO:0000255" key="3">
    <source>
        <dbReference type="PROSITE-ProRule" id="PRU00076"/>
    </source>
</evidence>
<evidence type="ECO:0000255" key="4">
    <source>
        <dbReference type="PROSITE-ProRule" id="PRU00498"/>
    </source>
</evidence>
<evidence type="ECO:0000305" key="5"/>
<protein>
    <recommendedName>
        <fullName>Pro-Viral epidermal growth factor</fullName>
        <shortName>Pro-VGF</shortName>
    </recommendedName>
    <component>
        <recommendedName>
            <fullName>Viral epidermal growth factor</fullName>
            <shortName>VGF</shortName>
        </recommendedName>
        <alternativeName>
            <fullName>Secreted epidermal growth factor-like</fullName>
        </alternativeName>
    </component>
</protein>
<feature type="signal peptide" evidence="2">
    <location>
        <begin position="1"/>
        <end position="19"/>
    </location>
</feature>
<feature type="chain" id="PRO_0000457186" description="Pro-Viral epidermal growth factor" evidence="2">
    <location>
        <begin position="20"/>
        <end position="142"/>
    </location>
</feature>
<feature type="chain" id="PRO_0000457187" description="Viral epidermal growth factor">
    <location>
        <begin position="20"/>
        <end position="96"/>
    </location>
</feature>
<feature type="topological domain" description="Extracellular" evidence="5">
    <location>
        <begin position="20"/>
        <end position="104"/>
    </location>
</feature>
<feature type="transmembrane region" description="Helical" evidence="2">
    <location>
        <begin position="105"/>
        <end position="125"/>
    </location>
</feature>
<feature type="topological domain" description="Cytoplasmic" evidence="5">
    <location>
        <begin position="126"/>
        <end position="142"/>
    </location>
</feature>
<feature type="site" description="Cleavage (By host ADAM10 protease)" evidence="1">
    <location>
        <begin position="96"/>
        <end position="97"/>
    </location>
</feature>
<feature type="glycosylation site" description="N-linked (GlcNAc...) asparagine; by host" evidence="4">
    <location>
        <position position="34"/>
    </location>
</feature>
<feature type="disulfide bond" evidence="3">
    <location>
        <begin position="71"/>
        <end position="80"/>
    </location>
</feature>
<gene>
    <name type="primary">OPG019</name>
    <name type="ORF">MPXVgp006</name>
</gene>
<name>VGF_MONPV</name>